<keyword id="KW-0028">Amino-acid biosynthesis</keyword>
<keyword id="KW-0100">Branched-chain amino acid biosynthesis</keyword>
<keyword id="KW-0963">Cytoplasm</keyword>
<keyword id="KW-0432">Leucine biosynthesis</keyword>
<keyword id="KW-0460">Magnesium</keyword>
<keyword id="KW-0479">Metal-binding</keyword>
<keyword id="KW-0808">Transferase</keyword>
<name>LEU1_PSEPF</name>
<organism>
    <name type="scientific">Pseudomonas fluorescens (strain Pf0-1)</name>
    <dbReference type="NCBI Taxonomy" id="205922"/>
    <lineage>
        <taxon>Bacteria</taxon>
        <taxon>Pseudomonadati</taxon>
        <taxon>Pseudomonadota</taxon>
        <taxon>Gammaproteobacteria</taxon>
        <taxon>Pseudomonadales</taxon>
        <taxon>Pseudomonadaceae</taxon>
        <taxon>Pseudomonas</taxon>
    </lineage>
</organism>
<dbReference type="EC" id="2.3.3.13" evidence="1"/>
<dbReference type="EMBL" id="CP000094">
    <property type="protein sequence ID" value="ABA76331.1"/>
    <property type="molecule type" value="Genomic_DNA"/>
</dbReference>
<dbReference type="RefSeq" id="WP_011335803.1">
    <property type="nucleotide sequence ID" value="NC_007492.2"/>
</dbReference>
<dbReference type="SMR" id="Q3K7C3"/>
<dbReference type="KEGG" id="pfo:Pfl01_4594"/>
<dbReference type="eggNOG" id="COG0119">
    <property type="taxonomic scope" value="Bacteria"/>
</dbReference>
<dbReference type="HOGENOM" id="CLU_004588_3_0_6"/>
<dbReference type="UniPathway" id="UPA00048">
    <property type="reaction ID" value="UER00070"/>
</dbReference>
<dbReference type="Proteomes" id="UP000002704">
    <property type="component" value="Chromosome"/>
</dbReference>
<dbReference type="GO" id="GO:0005737">
    <property type="term" value="C:cytoplasm"/>
    <property type="evidence" value="ECO:0007669"/>
    <property type="project" value="UniProtKB-SubCell"/>
</dbReference>
<dbReference type="GO" id="GO:0003852">
    <property type="term" value="F:2-isopropylmalate synthase activity"/>
    <property type="evidence" value="ECO:0007669"/>
    <property type="project" value="UniProtKB-UniRule"/>
</dbReference>
<dbReference type="GO" id="GO:0003985">
    <property type="term" value="F:acetyl-CoA C-acetyltransferase activity"/>
    <property type="evidence" value="ECO:0007669"/>
    <property type="project" value="UniProtKB-UniRule"/>
</dbReference>
<dbReference type="GO" id="GO:0000287">
    <property type="term" value="F:magnesium ion binding"/>
    <property type="evidence" value="ECO:0007669"/>
    <property type="project" value="UniProtKB-UniRule"/>
</dbReference>
<dbReference type="GO" id="GO:0009098">
    <property type="term" value="P:L-leucine biosynthetic process"/>
    <property type="evidence" value="ECO:0007669"/>
    <property type="project" value="UniProtKB-UniRule"/>
</dbReference>
<dbReference type="CDD" id="cd07942">
    <property type="entry name" value="DRE_TIM_LeuA"/>
    <property type="match status" value="1"/>
</dbReference>
<dbReference type="FunFam" id="3.20.20.70:FF:000045">
    <property type="entry name" value="2-isopropylmalate synthase"/>
    <property type="match status" value="1"/>
</dbReference>
<dbReference type="Gene3D" id="3.30.160.270">
    <property type="match status" value="1"/>
</dbReference>
<dbReference type="Gene3D" id="3.20.20.70">
    <property type="entry name" value="Aldolase class I"/>
    <property type="match status" value="1"/>
</dbReference>
<dbReference type="HAMAP" id="MF_00572">
    <property type="entry name" value="LeuA_type2"/>
    <property type="match status" value="1"/>
</dbReference>
<dbReference type="InterPro" id="IPR013709">
    <property type="entry name" value="2-isopropylmalate_synth_dimer"/>
</dbReference>
<dbReference type="InterPro" id="IPR002034">
    <property type="entry name" value="AIPM/Hcit_synth_CS"/>
</dbReference>
<dbReference type="InterPro" id="IPR013785">
    <property type="entry name" value="Aldolase_TIM"/>
</dbReference>
<dbReference type="InterPro" id="IPR005668">
    <property type="entry name" value="IPM_Synthase"/>
</dbReference>
<dbReference type="InterPro" id="IPR054692">
    <property type="entry name" value="LeuA-like_post-cat"/>
</dbReference>
<dbReference type="InterPro" id="IPR036230">
    <property type="entry name" value="LeuA_allosteric_dom_sf"/>
</dbReference>
<dbReference type="InterPro" id="IPR039371">
    <property type="entry name" value="LeuA_N_DRE-TIM"/>
</dbReference>
<dbReference type="InterPro" id="IPR000891">
    <property type="entry name" value="PYR_CT"/>
</dbReference>
<dbReference type="NCBIfam" id="TIGR00970">
    <property type="entry name" value="leuA_yeast"/>
    <property type="match status" value="1"/>
</dbReference>
<dbReference type="NCBIfam" id="NF002991">
    <property type="entry name" value="PRK03739.1"/>
    <property type="match status" value="1"/>
</dbReference>
<dbReference type="PANTHER" id="PTHR46911">
    <property type="match status" value="1"/>
</dbReference>
<dbReference type="PANTHER" id="PTHR46911:SF1">
    <property type="entry name" value="2-ISOPROPYLMALATE SYNTHASE"/>
    <property type="match status" value="1"/>
</dbReference>
<dbReference type="Pfam" id="PF00682">
    <property type="entry name" value="HMGL-like"/>
    <property type="match status" value="1"/>
</dbReference>
<dbReference type="Pfam" id="PF22615">
    <property type="entry name" value="IPMS_D2"/>
    <property type="match status" value="1"/>
</dbReference>
<dbReference type="Pfam" id="PF08502">
    <property type="entry name" value="LeuA_dimer"/>
    <property type="match status" value="1"/>
</dbReference>
<dbReference type="SMART" id="SM00917">
    <property type="entry name" value="LeuA_dimer"/>
    <property type="match status" value="1"/>
</dbReference>
<dbReference type="SUPFAM" id="SSF110921">
    <property type="entry name" value="2-isopropylmalate synthase LeuA, allosteric (dimerisation) domain"/>
    <property type="match status" value="1"/>
</dbReference>
<dbReference type="SUPFAM" id="SSF51569">
    <property type="entry name" value="Aldolase"/>
    <property type="match status" value="1"/>
</dbReference>
<dbReference type="SUPFAM" id="SSF89000">
    <property type="entry name" value="post-HMGL domain-like"/>
    <property type="match status" value="1"/>
</dbReference>
<dbReference type="PROSITE" id="PS00815">
    <property type="entry name" value="AIPM_HOMOCIT_SYNTH_1"/>
    <property type="match status" value="1"/>
</dbReference>
<dbReference type="PROSITE" id="PS00816">
    <property type="entry name" value="AIPM_HOMOCIT_SYNTH_2"/>
    <property type="match status" value="1"/>
</dbReference>
<dbReference type="PROSITE" id="PS50991">
    <property type="entry name" value="PYR_CT"/>
    <property type="match status" value="1"/>
</dbReference>
<accession>Q3K7C3</accession>
<comment type="function">
    <text evidence="1">Catalyzes the condensation of the acetyl group of acetyl-CoA with 3-methyl-2-oxobutanoate (2-ketoisovalerate) to form 3-carboxy-3-hydroxy-4-methylpentanoate (2-isopropylmalate).</text>
</comment>
<comment type="catalytic activity">
    <reaction evidence="1">
        <text>3-methyl-2-oxobutanoate + acetyl-CoA + H2O = (2S)-2-isopropylmalate + CoA + H(+)</text>
        <dbReference type="Rhea" id="RHEA:21524"/>
        <dbReference type="ChEBI" id="CHEBI:1178"/>
        <dbReference type="ChEBI" id="CHEBI:11851"/>
        <dbReference type="ChEBI" id="CHEBI:15377"/>
        <dbReference type="ChEBI" id="CHEBI:15378"/>
        <dbReference type="ChEBI" id="CHEBI:57287"/>
        <dbReference type="ChEBI" id="CHEBI:57288"/>
        <dbReference type="EC" id="2.3.3.13"/>
    </reaction>
</comment>
<comment type="cofactor">
    <cofactor evidence="1">
        <name>Mg(2+)</name>
        <dbReference type="ChEBI" id="CHEBI:18420"/>
    </cofactor>
</comment>
<comment type="pathway">
    <text evidence="1">Amino-acid biosynthesis; L-leucine biosynthesis; L-leucine from 3-methyl-2-oxobutanoate: step 1/4.</text>
</comment>
<comment type="subunit">
    <text evidence="1">Homodimer.</text>
</comment>
<comment type="subcellular location">
    <subcellularLocation>
        <location evidence="1">Cytoplasm</location>
    </subcellularLocation>
</comment>
<comment type="similarity">
    <text evidence="1">Belongs to the alpha-IPM synthase/homocitrate synthase family. LeuA type 2 subfamily.</text>
</comment>
<feature type="chain" id="PRO_1000025037" description="2-isopropylmalate synthase">
    <location>
        <begin position="1"/>
        <end position="559"/>
    </location>
</feature>
<feature type="domain" description="Pyruvate carboxyltransferase" evidence="1">
    <location>
        <begin position="33"/>
        <end position="307"/>
    </location>
</feature>
<feature type="region of interest" description="Regulatory domain" evidence="1">
    <location>
        <begin position="439"/>
        <end position="559"/>
    </location>
</feature>
<feature type="binding site" evidence="1">
    <location>
        <position position="42"/>
    </location>
    <ligand>
        <name>Mg(2+)</name>
        <dbReference type="ChEBI" id="CHEBI:18420"/>
    </ligand>
</feature>
<feature type="binding site" evidence="1">
    <location>
        <position position="246"/>
    </location>
    <ligand>
        <name>Mg(2+)</name>
        <dbReference type="ChEBI" id="CHEBI:18420"/>
    </ligand>
</feature>
<feature type="binding site" evidence="1">
    <location>
        <position position="248"/>
    </location>
    <ligand>
        <name>Mg(2+)</name>
        <dbReference type="ChEBI" id="CHEBI:18420"/>
    </ligand>
</feature>
<feature type="binding site" evidence="1">
    <location>
        <position position="282"/>
    </location>
    <ligand>
        <name>Mg(2+)</name>
        <dbReference type="ChEBI" id="CHEBI:18420"/>
    </ligand>
</feature>
<evidence type="ECO:0000255" key="1">
    <source>
        <dbReference type="HAMAP-Rule" id="MF_00572"/>
    </source>
</evidence>
<proteinExistence type="inferred from homology"/>
<gene>
    <name evidence="1" type="primary">leuA</name>
    <name type="ordered locus">Pfl01_4594</name>
</gene>
<sequence>MSMLKDPSSKYRAFPVINLPDRTWPSKTIDAAPIWCSSDLRDGNQSLIEPMDAVKKLRFWKTLVQVGVKEIEASFPAASQTDFDFVRTLIEDGHIPDDTTIQVLTQGREDLIERTFESLRGAKKAIVHLYNATSPSFRRIVFNQDKDGIKAIAVNAAKLFVKYAAMQPDTEWTFEYSPETFSATELEFAKEVCDAVIEVWNPTPEHKIILNLPATVECATPNVYADQIEWFHRNINRRDSVIISLHTHNDRGTGVAATELGLMAGADRVEGCLFGNGERTGNVDLVTVALNMYTQGINPDLDFSDIDGVRKVVEECNQIQVHPRHPYVGDLVHTAFSGSHQDAIRKGFAQQKPDTLWEVPYLPIDPADIGRSYEAVIRVNSQSGKGGIAYLLEQEYGISLPRRMQIEFSQVVQRETDRLGLEMTAQQIHALLHSEYLQANTPYALVSHRLQEENGNSAVEVEVASKGQGETNLHWRGKGNGALEALVAGLPIPVEIMDYNEHAIGAGTNAKAAAYIELRVNGERAVHGVGIDENITTASFKALFSALNRSLSQPEAKAA</sequence>
<reference key="1">
    <citation type="journal article" date="2009" name="Genome Biol.">
        <title>Genomic and genetic analyses of diversity and plant interactions of Pseudomonas fluorescens.</title>
        <authorList>
            <person name="Silby M.W."/>
            <person name="Cerdeno-Tarraga A.M."/>
            <person name="Vernikos G.S."/>
            <person name="Giddens S.R."/>
            <person name="Jackson R.W."/>
            <person name="Preston G.M."/>
            <person name="Zhang X.-X."/>
            <person name="Moon C.D."/>
            <person name="Gehrig S.M."/>
            <person name="Godfrey S.A.C."/>
            <person name="Knight C.G."/>
            <person name="Malone J.G."/>
            <person name="Robinson Z."/>
            <person name="Spiers A.J."/>
            <person name="Harris S."/>
            <person name="Challis G.L."/>
            <person name="Yaxley A.M."/>
            <person name="Harris D."/>
            <person name="Seeger K."/>
            <person name="Murphy L."/>
            <person name="Rutter S."/>
            <person name="Squares R."/>
            <person name="Quail M.A."/>
            <person name="Saunders E."/>
            <person name="Mavromatis K."/>
            <person name="Brettin T.S."/>
            <person name="Bentley S.D."/>
            <person name="Hothersall J."/>
            <person name="Stephens E."/>
            <person name="Thomas C.M."/>
            <person name="Parkhill J."/>
            <person name="Levy S.B."/>
            <person name="Rainey P.B."/>
            <person name="Thomson N.R."/>
        </authorList>
    </citation>
    <scope>NUCLEOTIDE SEQUENCE [LARGE SCALE GENOMIC DNA]</scope>
    <source>
        <strain>Pf0-1</strain>
    </source>
</reference>
<protein>
    <recommendedName>
        <fullName evidence="1">2-isopropylmalate synthase</fullName>
        <ecNumber evidence="1">2.3.3.13</ecNumber>
    </recommendedName>
    <alternativeName>
        <fullName evidence="1">Alpha-IPM synthase</fullName>
    </alternativeName>
    <alternativeName>
        <fullName evidence="1">Alpha-isopropylmalate synthase</fullName>
    </alternativeName>
</protein>